<protein>
    <recommendedName>
        <fullName evidence="1">Replication initiation control protein YabA</fullName>
    </recommendedName>
</protein>
<dbReference type="EMBL" id="AE014074">
    <property type="protein sequence ID" value="AAM78898.1"/>
    <property type="molecule type" value="Genomic_DNA"/>
</dbReference>
<dbReference type="RefSeq" id="WP_011054221.1">
    <property type="nucleotide sequence ID" value="NC_004070.1"/>
</dbReference>
<dbReference type="SMR" id="P0DH54"/>
<dbReference type="KEGG" id="spg:SpyM3_0291"/>
<dbReference type="HOGENOM" id="CLU_157169_0_0_9"/>
<dbReference type="Proteomes" id="UP000000564">
    <property type="component" value="Chromosome"/>
</dbReference>
<dbReference type="GO" id="GO:0009295">
    <property type="term" value="C:nucleoid"/>
    <property type="evidence" value="ECO:0007669"/>
    <property type="project" value="UniProtKB-SubCell"/>
</dbReference>
<dbReference type="GO" id="GO:0006260">
    <property type="term" value="P:DNA replication"/>
    <property type="evidence" value="ECO:0007669"/>
    <property type="project" value="UniProtKB-UniRule"/>
</dbReference>
<dbReference type="HAMAP" id="MF_01159">
    <property type="entry name" value="YabA"/>
    <property type="match status" value="1"/>
</dbReference>
<dbReference type="InterPro" id="IPR010377">
    <property type="entry name" value="YabA"/>
</dbReference>
<dbReference type="NCBIfam" id="NF009640">
    <property type="entry name" value="PRK13169.1-1"/>
    <property type="match status" value="1"/>
</dbReference>
<dbReference type="Pfam" id="PF06156">
    <property type="entry name" value="YabA"/>
    <property type="match status" value="1"/>
</dbReference>
<dbReference type="PIRSF" id="PIRSF021439">
    <property type="entry name" value="DUF972"/>
    <property type="match status" value="1"/>
</dbReference>
<feature type="chain" id="PRO_0000211930" description="Replication initiation control protein YabA">
    <location>
        <begin position="1"/>
        <end position="107"/>
    </location>
</feature>
<feature type="binding site" evidence="1">
    <location>
        <position position="81"/>
    </location>
    <ligand>
        <name>Zn(2+)</name>
        <dbReference type="ChEBI" id="CHEBI:29105"/>
    </ligand>
</feature>
<feature type="binding site" evidence="1">
    <location>
        <position position="83"/>
    </location>
    <ligand>
        <name>Zn(2+)</name>
        <dbReference type="ChEBI" id="CHEBI:29105"/>
    </ligand>
</feature>
<feature type="binding site" evidence="1">
    <location>
        <position position="97"/>
    </location>
    <ligand>
        <name>Zn(2+)</name>
        <dbReference type="ChEBI" id="CHEBI:29105"/>
    </ligand>
</feature>
<feature type="binding site" evidence="1">
    <location>
        <position position="100"/>
    </location>
    <ligand>
        <name>Zn(2+)</name>
        <dbReference type="ChEBI" id="CHEBI:29105"/>
    </ligand>
</feature>
<evidence type="ECO:0000255" key="1">
    <source>
        <dbReference type="HAMAP-Rule" id="MF_01159"/>
    </source>
</evidence>
<organism>
    <name type="scientific">Streptococcus pyogenes serotype M3 (strain ATCC BAA-595 / MGAS315)</name>
    <dbReference type="NCBI Taxonomy" id="198466"/>
    <lineage>
        <taxon>Bacteria</taxon>
        <taxon>Bacillati</taxon>
        <taxon>Bacillota</taxon>
        <taxon>Bacilli</taxon>
        <taxon>Lactobacillales</taxon>
        <taxon>Streptococcaceae</taxon>
        <taxon>Streptococcus</taxon>
    </lineage>
</organism>
<proteinExistence type="inferred from homology"/>
<reference key="1">
    <citation type="journal article" date="2002" name="Proc. Natl. Acad. Sci. U.S.A.">
        <title>Genome sequence of a serotype M3 strain of group A Streptococcus: phage-encoded toxins, the high-virulence phenotype, and clone emergence.</title>
        <authorList>
            <person name="Beres S.B."/>
            <person name="Sylva G.L."/>
            <person name="Barbian K.D."/>
            <person name="Lei B."/>
            <person name="Hoff J.S."/>
            <person name="Mammarella N.D."/>
            <person name="Liu M.-Y."/>
            <person name="Smoot J.C."/>
            <person name="Porcella S.F."/>
            <person name="Parkins L.D."/>
            <person name="Campbell D.S."/>
            <person name="Smith T.M."/>
            <person name="McCormick J.K."/>
            <person name="Leung D.Y.M."/>
            <person name="Schlievert P.M."/>
            <person name="Musser J.M."/>
        </authorList>
    </citation>
    <scope>NUCLEOTIDE SEQUENCE [LARGE SCALE GENOMIC DNA]</scope>
    <source>
        <strain>ATCC BAA-595 / MGAS315</strain>
    </source>
</reference>
<gene>
    <name evidence="1" type="primary">yabA</name>
    <name type="ordered locus">SpyM3_0291</name>
</gene>
<keyword id="KW-0963">Cytoplasm</keyword>
<keyword id="KW-0235">DNA replication</keyword>
<keyword id="KW-0236">DNA replication inhibitor</keyword>
<keyword id="KW-0479">Metal-binding</keyword>
<keyword id="KW-0862">Zinc</keyword>
<name>YABA_STRP3</name>
<sequence>MNKKELFDAFDGFSQNLMVTLAEIEAMKKQVQSLVEENTILRLENTKLRERLSHLEHETAAKNPSKQRKDHLEGIYDEGFHICNFFYGQRRENDEECMFCRELLDRK</sequence>
<accession>P0DH54</accession>
<accession>Q878C1</accession>
<accession>Q8K8H2</accession>
<comment type="function">
    <text evidence="1">Involved in control of chromosome replication initiation. Inhibits the cooperative binding of DnaA to the oriC region, thus negatively regulating initiation of chromosome replication. Inhibits the ability of DnaA-ATP to form a helix on DNA; does not disassemble preformed DnaA-DNA helices. Decreases the residence time of DnaA on the chromosome at its binding sites (oriC, replication forks and promoter-binding sites). Tethers DnaA to the replication machinery via the DNA polymerase beta sliding clamp subunit (dnaN). Associates with oriC and other DnaA targets on the chromosome in a DnaA-dependent manner.</text>
</comment>
<comment type="cofactor">
    <cofactor evidence="1">
        <name>Zn(2+)</name>
        <dbReference type="ChEBI" id="CHEBI:29105"/>
    </cofactor>
    <text evidence="1">Binds 1 zinc ion per subunit.</text>
</comment>
<comment type="subunit">
    <text evidence="1">Homotetramer. Interacts with both DnaA and DnaN, acting as a bridge between these two proteins.</text>
</comment>
<comment type="subcellular location">
    <subcellularLocation>
        <location evidence="1">Cytoplasm</location>
        <location evidence="1">Nucleoid</location>
    </subcellularLocation>
    <text evidence="1">Localizes in tight foci, which correspond to the replisome at mid-cell throughout the cell cycle.</text>
</comment>
<comment type="similarity">
    <text evidence="1">Belongs to the YabA family.</text>
</comment>